<evidence type="ECO:0000255" key="1">
    <source>
        <dbReference type="HAMAP-Rule" id="MF_00156"/>
    </source>
</evidence>
<evidence type="ECO:0000256" key="2">
    <source>
        <dbReference type="SAM" id="MobiDB-lite"/>
    </source>
</evidence>
<protein>
    <recommendedName>
        <fullName evidence="1">3-methyl-2-oxobutanoate hydroxymethyltransferase</fullName>
        <ecNumber evidence="1">2.1.2.11</ecNumber>
    </recommendedName>
    <alternativeName>
        <fullName evidence="1">Ketopantoate hydroxymethyltransferase</fullName>
        <shortName evidence="1">KPHMT</shortName>
    </alternativeName>
</protein>
<sequence>MAPSNLPESTTPAEVPAPYGTGPAAAAQAASAAGRKPISRVRIHHLQQAKDNGEHFAMLTAYEQYTAEIFDQAGIEVLLVGDSASNNVYGNETSLPVTVDELLPLTRAVSRSAKRALIVADLPFGSYEVSPGQAVATGVRFLKEGLAHAVKIEGTAYYADTVRAMVQAGIPVMAHIGFTPQSEHSLGGYRVQGRGDDAQRLVDDAVALQDAGAFSVLMEMVPAETAAAVDAALRVPTVGIGAGKTTTGQVLVWQDMAGLRGGKMAKFVKQYADLRTTLSDAAAAYGEDVRSGQFPGPEHSF</sequence>
<dbReference type="EC" id="2.1.2.11" evidence="1"/>
<dbReference type="EMBL" id="CP000474">
    <property type="protein sequence ID" value="ABM08191.1"/>
    <property type="molecule type" value="Genomic_DNA"/>
</dbReference>
<dbReference type="RefSeq" id="WP_011774436.1">
    <property type="nucleotide sequence ID" value="NC_008711.1"/>
</dbReference>
<dbReference type="SMR" id="A1R5H8"/>
<dbReference type="STRING" id="290340.AAur_1730"/>
<dbReference type="KEGG" id="aau:AAur_1730"/>
<dbReference type="eggNOG" id="COG0413">
    <property type="taxonomic scope" value="Bacteria"/>
</dbReference>
<dbReference type="HOGENOM" id="CLU_036645_1_0_11"/>
<dbReference type="OrthoDB" id="9781789at2"/>
<dbReference type="UniPathway" id="UPA00028">
    <property type="reaction ID" value="UER00003"/>
</dbReference>
<dbReference type="Proteomes" id="UP000000637">
    <property type="component" value="Chromosome"/>
</dbReference>
<dbReference type="GO" id="GO:0005737">
    <property type="term" value="C:cytoplasm"/>
    <property type="evidence" value="ECO:0007669"/>
    <property type="project" value="UniProtKB-SubCell"/>
</dbReference>
<dbReference type="GO" id="GO:0003864">
    <property type="term" value="F:3-methyl-2-oxobutanoate hydroxymethyltransferase activity"/>
    <property type="evidence" value="ECO:0007669"/>
    <property type="project" value="UniProtKB-UniRule"/>
</dbReference>
<dbReference type="GO" id="GO:0000287">
    <property type="term" value="F:magnesium ion binding"/>
    <property type="evidence" value="ECO:0007669"/>
    <property type="project" value="TreeGrafter"/>
</dbReference>
<dbReference type="GO" id="GO:0015940">
    <property type="term" value="P:pantothenate biosynthetic process"/>
    <property type="evidence" value="ECO:0007669"/>
    <property type="project" value="UniProtKB-UniRule"/>
</dbReference>
<dbReference type="CDD" id="cd06557">
    <property type="entry name" value="KPHMT-like"/>
    <property type="match status" value="1"/>
</dbReference>
<dbReference type="FunFam" id="3.20.20.60:FF:000003">
    <property type="entry name" value="3-methyl-2-oxobutanoate hydroxymethyltransferase"/>
    <property type="match status" value="1"/>
</dbReference>
<dbReference type="Gene3D" id="3.20.20.60">
    <property type="entry name" value="Phosphoenolpyruvate-binding domains"/>
    <property type="match status" value="1"/>
</dbReference>
<dbReference type="HAMAP" id="MF_00156">
    <property type="entry name" value="PanB"/>
    <property type="match status" value="1"/>
</dbReference>
<dbReference type="InterPro" id="IPR003700">
    <property type="entry name" value="Pantoate_hydroxy_MeTrfase"/>
</dbReference>
<dbReference type="InterPro" id="IPR015813">
    <property type="entry name" value="Pyrv/PenolPyrv_kinase-like_dom"/>
</dbReference>
<dbReference type="InterPro" id="IPR040442">
    <property type="entry name" value="Pyrv_kinase-like_dom_sf"/>
</dbReference>
<dbReference type="NCBIfam" id="TIGR00222">
    <property type="entry name" value="panB"/>
    <property type="match status" value="1"/>
</dbReference>
<dbReference type="NCBIfam" id="NF001452">
    <property type="entry name" value="PRK00311.1"/>
    <property type="match status" value="1"/>
</dbReference>
<dbReference type="PANTHER" id="PTHR20881">
    <property type="entry name" value="3-METHYL-2-OXOBUTANOATE HYDROXYMETHYLTRANSFERASE"/>
    <property type="match status" value="1"/>
</dbReference>
<dbReference type="PANTHER" id="PTHR20881:SF0">
    <property type="entry name" value="3-METHYL-2-OXOBUTANOATE HYDROXYMETHYLTRANSFERASE"/>
    <property type="match status" value="1"/>
</dbReference>
<dbReference type="Pfam" id="PF02548">
    <property type="entry name" value="Pantoate_transf"/>
    <property type="match status" value="1"/>
</dbReference>
<dbReference type="PIRSF" id="PIRSF000388">
    <property type="entry name" value="Pantoate_hydroxy_MeTrfase"/>
    <property type="match status" value="1"/>
</dbReference>
<dbReference type="SUPFAM" id="SSF51621">
    <property type="entry name" value="Phosphoenolpyruvate/pyruvate domain"/>
    <property type="match status" value="1"/>
</dbReference>
<comment type="function">
    <text evidence="1">Catalyzes the reversible reaction in which hydroxymethyl group from 5,10-methylenetetrahydrofolate is transferred onto alpha-ketoisovalerate to form ketopantoate.</text>
</comment>
<comment type="catalytic activity">
    <reaction evidence="1">
        <text>3-methyl-2-oxobutanoate + (6R)-5,10-methylene-5,6,7,8-tetrahydrofolate + H2O = 2-dehydropantoate + (6S)-5,6,7,8-tetrahydrofolate</text>
        <dbReference type="Rhea" id="RHEA:11824"/>
        <dbReference type="ChEBI" id="CHEBI:11561"/>
        <dbReference type="ChEBI" id="CHEBI:11851"/>
        <dbReference type="ChEBI" id="CHEBI:15377"/>
        <dbReference type="ChEBI" id="CHEBI:15636"/>
        <dbReference type="ChEBI" id="CHEBI:57453"/>
        <dbReference type="EC" id="2.1.2.11"/>
    </reaction>
</comment>
<comment type="cofactor">
    <cofactor evidence="1">
        <name>Mg(2+)</name>
        <dbReference type="ChEBI" id="CHEBI:18420"/>
    </cofactor>
    <text evidence="1">Binds 1 Mg(2+) ion per subunit.</text>
</comment>
<comment type="pathway">
    <text evidence="1">Cofactor biosynthesis; (R)-pantothenate biosynthesis; (R)-pantoate from 3-methyl-2-oxobutanoate: step 1/2.</text>
</comment>
<comment type="subunit">
    <text evidence="1">Homodecamer; pentamer of dimers.</text>
</comment>
<comment type="subcellular location">
    <subcellularLocation>
        <location evidence="1">Cytoplasm</location>
    </subcellularLocation>
</comment>
<comment type="similarity">
    <text evidence="1">Belongs to the PanB family.</text>
</comment>
<gene>
    <name evidence="1" type="primary">panB</name>
    <name type="ordered locus">AAur_1730</name>
</gene>
<organism>
    <name type="scientific">Paenarthrobacter aurescens (strain TC1)</name>
    <dbReference type="NCBI Taxonomy" id="290340"/>
    <lineage>
        <taxon>Bacteria</taxon>
        <taxon>Bacillati</taxon>
        <taxon>Actinomycetota</taxon>
        <taxon>Actinomycetes</taxon>
        <taxon>Micrococcales</taxon>
        <taxon>Micrococcaceae</taxon>
        <taxon>Paenarthrobacter</taxon>
    </lineage>
</organism>
<reference key="1">
    <citation type="journal article" date="2006" name="PLoS Genet.">
        <title>Secrets of soil survival revealed by the genome sequence of Arthrobacter aurescens TC1.</title>
        <authorList>
            <person name="Mongodin E.F."/>
            <person name="Shapir N."/>
            <person name="Daugherty S.C."/>
            <person name="DeBoy R.T."/>
            <person name="Emerson J.B."/>
            <person name="Shvartzbeyn A."/>
            <person name="Radune D."/>
            <person name="Vamathevan J."/>
            <person name="Riggs F."/>
            <person name="Grinberg V."/>
            <person name="Khouri H.M."/>
            <person name="Wackett L.P."/>
            <person name="Nelson K.E."/>
            <person name="Sadowsky M.J."/>
        </authorList>
    </citation>
    <scope>NUCLEOTIDE SEQUENCE [LARGE SCALE GENOMIC DNA]</scope>
    <source>
        <strain>TC1</strain>
    </source>
</reference>
<accession>A1R5H8</accession>
<feature type="chain" id="PRO_0000297216" description="3-methyl-2-oxobutanoate hydroxymethyltransferase">
    <location>
        <begin position="1"/>
        <end position="301"/>
    </location>
</feature>
<feature type="region of interest" description="Disordered" evidence="2">
    <location>
        <begin position="1"/>
        <end position="24"/>
    </location>
</feature>
<feature type="compositionally biased region" description="Polar residues" evidence="2">
    <location>
        <begin position="1"/>
        <end position="12"/>
    </location>
</feature>
<feature type="active site" description="Proton acceptor" evidence="1">
    <location>
        <position position="219"/>
    </location>
</feature>
<feature type="binding site" evidence="1">
    <location>
        <begin position="82"/>
        <end position="83"/>
    </location>
    <ligand>
        <name>3-methyl-2-oxobutanoate</name>
        <dbReference type="ChEBI" id="CHEBI:11851"/>
    </ligand>
</feature>
<feature type="binding site" evidence="1">
    <location>
        <position position="82"/>
    </location>
    <ligand>
        <name>Mg(2+)</name>
        <dbReference type="ChEBI" id="CHEBI:18420"/>
    </ligand>
</feature>
<feature type="binding site" evidence="1">
    <location>
        <position position="121"/>
    </location>
    <ligand>
        <name>3-methyl-2-oxobutanoate</name>
        <dbReference type="ChEBI" id="CHEBI:11851"/>
    </ligand>
</feature>
<feature type="binding site" evidence="1">
    <location>
        <position position="121"/>
    </location>
    <ligand>
        <name>Mg(2+)</name>
        <dbReference type="ChEBI" id="CHEBI:18420"/>
    </ligand>
</feature>
<feature type="binding site" evidence="1">
    <location>
        <position position="151"/>
    </location>
    <ligand>
        <name>3-methyl-2-oxobutanoate</name>
        <dbReference type="ChEBI" id="CHEBI:11851"/>
    </ligand>
</feature>
<feature type="binding site" evidence="1">
    <location>
        <position position="153"/>
    </location>
    <ligand>
        <name>Mg(2+)</name>
        <dbReference type="ChEBI" id="CHEBI:18420"/>
    </ligand>
</feature>
<proteinExistence type="inferred from homology"/>
<keyword id="KW-0963">Cytoplasm</keyword>
<keyword id="KW-0460">Magnesium</keyword>
<keyword id="KW-0479">Metal-binding</keyword>
<keyword id="KW-0566">Pantothenate biosynthesis</keyword>
<keyword id="KW-0808">Transferase</keyword>
<name>PANB_PAEAT</name>